<dbReference type="EC" id="6.3.4.20" evidence="1"/>
<dbReference type="EMBL" id="AE009441">
    <property type="protein sequence ID" value="AAL63927.1"/>
    <property type="molecule type" value="Genomic_DNA"/>
</dbReference>
<dbReference type="RefSeq" id="WP_011008397.1">
    <property type="nucleotide sequence ID" value="NC_003364.1"/>
</dbReference>
<dbReference type="SMR" id="Q8ZVX7"/>
<dbReference type="STRING" id="178306.PAE2074"/>
<dbReference type="EnsemblBacteria" id="AAL63927">
    <property type="protein sequence ID" value="AAL63927"/>
    <property type="gene ID" value="PAE2074"/>
</dbReference>
<dbReference type="GeneID" id="1464256"/>
<dbReference type="KEGG" id="pai:PAE2074"/>
<dbReference type="PATRIC" id="fig|178306.9.peg.1531"/>
<dbReference type="eggNOG" id="arCOG00039">
    <property type="taxonomic scope" value="Archaea"/>
</dbReference>
<dbReference type="HOGENOM" id="CLU_081854_1_0_2"/>
<dbReference type="InParanoid" id="Q8ZVX7"/>
<dbReference type="UniPathway" id="UPA00391"/>
<dbReference type="Proteomes" id="UP000002439">
    <property type="component" value="Chromosome"/>
</dbReference>
<dbReference type="GO" id="GO:0005524">
    <property type="term" value="F:ATP binding"/>
    <property type="evidence" value="ECO:0007669"/>
    <property type="project" value="UniProtKB-UniRule"/>
</dbReference>
<dbReference type="GO" id="GO:0016879">
    <property type="term" value="F:ligase activity, forming carbon-nitrogen bonds"/>
    <property type="evidence" value="ECO:0007669"/>
    <property type="project" value="UniProtKB-UniRule"/>
</dbReference>
<dbReference type="GO" id="GO:0008270">
    <property type="term" value="F:zinc ion binding"/>
    <property type="evidence" value="ECO:0007669"/>
    <property type="project" value="UniProtKB-UniRule"/>
</dbReference>
<dbReference type="CDD" id="cd01995">
    <property type="entry name" value="QueC-like"/>
    <property type="match status" value="1"/>
</dbReference>
<dbReference type="Gene3D" id="3.40.50.620">
    <property type="entry name" value="HUPs"/>
    <property type="match status" value="1"/>
</dbReference>
<dbReference type="HAMAP" id="MF_01633">
    <property type="entry name" value="QueC"/>
    <property type="match status" value="1"/>
</dbReference>
<dbReference type="InterPro" id="IPR018317">
    <property type="entry name" value="QueC"/>
</dbReference>
<dbReference type="InterPro" id="IPR014729">
    <property type="entry name" value="Rossmann-like_a/b/a_fold"/>
</dbReference>
<dbReference type="PANTHER" id="PTHR42914">
    <property type="entry name" value="7-CYANO-7-DEAZAGUANINE SYNTHASE"/>
    <property type="match status" value="1"/>
</dbReference>
<dbReference type="PANTHER" id="PTHR42914:SF1">
    <property type="entry name" value="7-CYANO-7-DEAZAGUANINE SYNTHASE"/>
    <property type="match status" value="1"/>
</dbReference>
<dbReference type="Pfam" id="PF06508">
    <property type="entry name" value="QueC"/>
    <property type="match status" value="1"/>
</dbReference>
<dbReference type="PIRSF" id="PIRSF006293">
    <property type="entry name" value="ExsB"/>
    <property type="match status" value="1"/>
</dbReference>
<dbReference type="SUPFAM" id="SSF52402">
    <property type="entry name" value="Adenine nucleotide alpha hydrolases-like"/>
    <property type="match status" value="1"/>
</dbReference>
<keyword id="KW-0067">ATP-binding</keyword>
<keyword id="KW-0436">Ligase</keyword>
<keyword id="KW-0479">Metal-binding</keyword>
<keyword id="KW-0547">Nucleotide-binding</keyword>
<keyword id="KW-1185">Reference proteome</keyword>
<keyword id="KW-0862">Zinc</keyword>
<comment type="function">
    <text evidence="1">Catalyzes the ATP-dependent conversion of 7-carboxy-7-deazaguanine (CDG) to 7-cyano-7-deazaguanine (preQ(0)).</text>
</comment>
<comment type="catalytic activity">
    <reaction evidence="1">
        <text>7-carboxy-7-deazaguanine + NH4(+) + ATP = 7-cyano-7-deazaguanine + ADP + phosphate + H2O + H(+)</text>
        <dbReference type="Rhea" id="RHEA:27982"/>
        <dbReference type="ChEBI" id="CHEBI:15377"/>
        <dbReference type="ChEBI" id="CHEBI:15378"/>
        <dbReference type="ChEBI" id="CHEBI:28938"/>
        <dbReference type="ChEBI" id="CHEBI:30616"/>
        <dbReference type="ChEBI" id="CHEBI:43474"/>
        <dbReference type="ChEBI" id="CHEBI:45075"/>
        <dbReference type="ChEBI" id="CHEBI:61036"/>
        <dbReference type="ChEBI" id="CHEBI:456216"/>
        <dbReference type="EC" id="6.3.4.20"/>
    </reaction>
</comment>
<comment type="cofactor">
    <cofactor evidence="1">
        <name>Zn(2+)</name>
        <dbReference type="ChEBI" id="CHEBI:29105"/>
    </cofactor>
    <text evidence="1">Binds 1 zinc ion per subunit.</text>
</comment>
<comment type="pathway">
    <text evidence="1">Purine metabolism; 7-cyano-7-deazaguanine biosynthesis.</text>
</comment>
<comment type="similarity">
    <text evidence="1">Belongs to the QueC family.</text>
</comment>
<sequence>MIVEKPCRVVAVVSGGPDSTCYTALWLKRGCDVHALSFLYGQKAVVEVERAQLLLRRLDGIAAERGWGRVVEHRVVDLSSLGELWRGTQLTDPSVSVEQSYTPTVVVPIRNVVMAAVATAYAYTVGRNAGAKTYVILGSHYDDIKPREDTWEPLYPDCSPECVEAMQTAFRICHFRGERGVEIWTPSREGLRKSQLLKMCHQEVGDLIYDTWSCYKSGEAHCGSCESCKNRHAAFIEAGLPDCTAYLTPPGPGFEKRGQFYLHISCKKQ</sequence>
<reference key="1">
    <citation type="journal article" date="2002" name="Proc. Natl. Acad. Sci. U.S.A.">
        <title>Genome sequence of the hyperthermophilic crenarchaeon Pyrobaculum aerophilum.</title>
        <authorList>
            <person name="Fitz-Gibbon S.T."/>
            <person name="Ladner H."/>
            <person name="Kim U.-J."/>
            <person name="Stetter K.O."/>
            <person name="Simon M.I."/>
            <person name="Miller J.H."/>
        </authorList>
    </citation>
    <scope>NUCLEOTIDE SEQUENCE [LARGE SCALE GENOMIC DNA]</scope>
    <source>
        <strain>ATCC 51768 / DSM 7523 / JCM 9630 / CIP 104966 / NBRC 100827 / IM2</strain>
    </source>
</reference>
<gene>
    <name evidence="1" type="primary">queC</name>
    <name type="ordered locus">PAE2074</name>
</gene>
<organism>
    <name type="scientific">Pyrobaculum aerophilum (strain ATCC 51768 / DSM 7523 / JCM 9630 / CIP 104966 / NBRC 100827 / IM2)</name>
    <dbReference type="NCBI Taxonomy" id="178306"/>
    <lineage>
        <taxon>Archaea</taxon>
        <taxon>Thermoproteota</taxon>
        <taxon>Thermoprotei</taxon>
        <taxon>Thermoproteales</taxon>
        <taxon>Thermoproteaceae</taxon>
        <taxon>Pyrobaculum</taxon>
    </lineage>
</organism>
<protein>
    <recommendedName>
        <fullName evidence="1">7-cyano-7-deazaguanine synthase</fullName>
        <ecNumber evidence="1">6.3.4.20</ecNumber>
    </recommendedName>
    <alternativeName>
        <fullName evidence="1">7-cyano-7-carbaguanine synthase</fullName>
    </alternativeName>
    <alternativeName>
        <fullName evidence="1">Archaeosine biosynthesis protein QueC</fullName>
    </alternativeName>
    <alternativeName>
        <fullName evidence="1">PreQ(0) synthase</fullName>
    </alternativeName>
</protein>
<name>QUEC_PYRAE</name>
<evidence type="ECO:0000255" key="1">
    <source>
        <dbReference type="HAMAP-Rule" id="MF_01633"/>
    </source>
</evidence>
<proteinExistence type="inferred from homology"/>
<accession>Q8ZVX7</accession>
<feature type="chain" id="PRO_0000246984" description="7-cyano-7-deazaguanine synthase">
    <location>
        <begin position="1"/>
        <end position="269"/>
    </location>
</feature>
<feature type="binding site" evidence="1">
    <location>
        <begin position="13"/>
        <end position="23"/>
    </location>
    <ligand>
        <name>ATP</name>
        <dbReference type="ChEBI" id="CHEBI:30616"/>
    </ligand>
</feature>
<feature type="binding site" evidence="1">
    <location>
        <position position="214"/>
    </location>
    <ligand>
        <name>Zn(2+)</name>
        <dbReference type="ChEBI" id="CHEBI:29105"/>
    </ligand>
</feature>
<feature type="binding site" evidence="1">
    <location>
        <position position="222"/>
    </location>
    <ligand>
        <name>Zn(2+)</name>
        <dbReference type="ChEBI" id="CHEBI:29105"/>
    </ligand>
</feature>
<feature type="binding site" evidence="1">
    <location>
        <position position="225"/>
    </location>
    <ligand>
        <name>Zn(2+)</name>
        <dbReference type="ChEBI" id="CHEBI:29105"/>
    </ligand>
</feature>
<feature type="binding site" evidence="1">
    <location>
        <position position="228"/>
    </location>
    <ligand>
        <name>Zn(2+)</name>
        <dbReference type="ChEBI" id="CHEBI:29105"/>
    </ligand>
</feature>